<sequence length="1100" mass="123265">MAEQTQLAPAAFHLPDLVAIQRNSFRWFLEEGLIEELESFSPITDYTGKLELHFLGKQYKLKRPKYDVDEAKRRDGTYSVQMYVPTRLINKETGEIKEQEVFIGDLPLMTDRGTFIINGAERVIVNQIVRSPGVYYKSERDKNGRLTHNASLIPNRGAWLKFETDKNGLVWVRIDKTRKLSAQVLLKALGLSDNEIYDKLRHPEYYQKTIDKEGQFSEDEALMELYRKLRPGEPPTVSGGQQLLESRFFDPKRYDLGRVGRYKLNKKLGLNVADTVRTLTSEDILAAIDYLINLELDLGGCEVDDIDHLGNRRVRSVGELLQNQVRVGLNRLERIIRERMTVSDSDSLSPASLVNPKPLVAAIKEFFGSSQLSQFMDQTNPLAELTHKRRLSALGPGGLTRERAGFAVRDIHPSHYGRICPIETPEGPNAGLIGSLATHARVNDYGFIETPFWRVEEGRVRKDLAPVYMTADQEDDLRVAPGDVATDDAGYILGTTIPVRYRQDFTTTTPERVDYVALSPVQIISVATSLIPFLEHDDANRALMSSNMQRQAVPLLRPERPLVGTGLEPQAARDSGMVITSPVDGTISYVDATHIEVTADTGEKYGYALQKYQRSNQDTCLNQRPIVFEGDRGQRGQVIADGSATEKGELALGQNILVAYMPWEGYNYEDAILISERLVYDDVYTSIHIEKFEIEARQTKLGPEEITREIPNVGEDALRQLDENGIIRVGAWVESGDILVGKVTPKGESDQPPEEKLLRAIFGEKARDVRDNSLRVPNGEKGRVVDVRLFTREQGDELPPGANMVVRVYVAQKRKIQVGDKMAGRHGNKGIISRILPCEDMPYLPDGTPLDIVLNPLGVPSRMNVGQVFECMLGWAGQLLDARFKVTPFDEMYGAEASRLTVNAKLSEAREQTGQPWVFSDDEPGKIQVYDGRTGEPFDRPVTVGRAYMLKLVHLVDDKIHARSTGPYSLVTQQPLGGKAQQGGQRFGEMEVWALEAYGAAYILQELLTVKSDDMQGRNEALNAIVKGKAIPRPGTPESFKVLMRELQSLCLDIAVYKASTEDYEEDKEVDLMADVNQRRTPSRPTYESMSVGDIDDDDD</sequence>
<proteinExistence type="inferred from homology"/>
<name>RPOB_SYNP6</name>
<reference key="1">
    <citation type="journal article" date="2007" name="Photosyn. Res.">
        <title>Complete nucleotide sequence of the freshwater unicellular cyanobacterium Synechococcus elongatus PCC 6301 chromosome: gene content and organization.</title>
        <authorList>
            <person name="Sugita C."/>
            <person name="Ogata K."/>
            <person name="Shikata M."/>
            <person name="Jikuya H."/>
            <person name="Takano J."/>
            <person name="Furumichi M."/>
            <person name="Kanehisa M."/>
            <person name="Omata T."/>
            <person name="Sugiura M."/>
            <person name="Sugita M."/>
        </authorList>
    </citation>
    <scope>NUCLEOTIDE SEQUENCE [LARGE SCALE GENOMIC DNA]</scope>
    <source>
        <strain>ATCC 27144 / PCC 6301 / SAUG 1402/1</strain>
    </source>
</reference>
<dbReference type="EC" id="2.7.7.6" evidence="1"/>
<dbReference type="EMBL" id="AP008231">
    <property type="protein sequence ID" value="BAD80697.1"/>
    <property type="molecule type" value="Genomic_DNA"/>
</dbReference>
<dbReference type="RefSeq" id="WP_011244817.1">
    <property type="nucleotide sequence ID" value="NC_006576.1"/>
</dbReference>
<dbReference type="SMR" id="Q5MZ23"/>
<dbReference type="KEGG" id="syc:syc2507_d"/>
<dbReference type="eggNOG" id="COG0085">
    <property type="taxonomic scope" value="Bacteria"/>
</dbReference>
<dbReference type="Proteomes" id="UP000001175">
    <property type="component" value="Chromosome"/>
</dbReference>
<dbReference type="GO" id="GO:0000428">
    <property type="term" value="C:DNA-directed RNA polymerase complex"/>
    <property type="evidence" value="ECO:0007669"/>
    <property type="project" value="UniProtKB-KW"/>
</dbReference>
<dbReference type="GO" id="GO:0003677">
    <property type="term" value="F:DNA binding"/>
    <property type="evidence" value="ECO:0007669"/>
    <property type="project" value="UniProtKB-UniRule"/>
</dbReference>
<dbReference type="GO" id="GO:0003899">
    <property type="term" value="F:DNA-directed RNA polymerase activity"/>
    <property type="evidence" value="ECO:0007669"/>
    <property type="project" value="UniProtKB-UniRule"/>
</dbReference>
<dbReference type="GO" id="GO:0032549">
    <property type="term" value="F:ribonucleoside binding"/>
    <property type="evidence" value="ECO:0007669"/>
    <property type="project" value="InterPro"/>
</dbReference>
<dbReference type="GO" id="GO:0006351">
    <property type="term" value="P:DNA-templated transcription"/>
    <property type="evidence" value="ECO:0007669"/>
    <property type="project" value="UniProtKB-UniRule"/>
</dbReference>
<dbReference type="CDD" id="cd00653">
    <property type="entry name" value="RNA_pol_B_RPB2"/>
    <property type="match status" value="1"/>
</dbReference>
<dbReference type="FunFam" id="3.90.1800.10:FF:000001">
    <property type="entry name" value="DNA-directed RNA polymerase subunit beta"/>
    <property type="match status" value="1"/>
</dbReference>
<dbReference type="Gene3D" id="2.40.50.100">
    <property type="match status" value="1"/>
</dbReference>
<dbReference type="Gene3D" id="2.40.50.150">
    <property type="match status" value="1"/>
</dbReference>
<dbReference type="Gene3D" id="3.90.1100.10">
    <property type="match status" value="1"/>
</dbReference>
<dbReference type="Gene3D" id="2.30.150.10">
    <property type="entry name" value="DNA-directed RNA polymerase, beta subunit, external 1 domain"/>
    <property type="match status" value="1"/>
</dbReference>
<dbReference type="Gene3D" id="2.40.270.10">
    <property type="entry name" value="DNA-directed RNA polymerase, subunit 2, domain 6"/>
    <property type="match status" value="1"/>
</dbReference>
<dbReference type="Gene3D" id="3.90.1800.10">
    <property type="entry name" value="RNA polymerase alpha subunit dimerisation domain"/>
    <property type="match status" value="1"/>
</dbReference>
<dbReference type="Gene3D" id="3.90.1110.10">
    <property type="entry name" value="RNA polymerase Rpb2, domain 2"/>
    <property type="match status" value="1"/>
</dbReference>
<dbReference type="HAMAP" id="MF_01321">
    <property type="entry name" value="RNApol_bact_RpoB"/>
    <property type="match status" value="1"/>
</dbReference>
<dbReference type="InterPro" id="IPR042107">
    <property type="entry name" value="DNA-dir_RNA_pol_bsu_ext_1_sf"/>
</dbReference>
<dbReference type="InterPro" id="IPR019462">
    <property type="entry name" value="DNA-dir_RNA_pol_bsu_external_1"/>
</dbReference>
<dbReference type="InterPro" id="IPR015712">
    <property type="entry name" value="DNA-dir_RNA_pol_su2"/>
</dbReference>
<dbReference type="InterPro" id="IPR007120">
    <property type="entry name" value="DNA-dir_RNAP_su2_dom"/>
</dbReference>
<dbReference type="InterPro" id="IPR037033">
    <property type="entry name" value="DNA-dir_RNAP_su2_hyb_sf"/>
</dbReference>
<dbReference type="InterPro" id="IPR010243">
    <property type="entry name" value="RNA_pol_bsu_bac"/>
</dbReference>
<dbReference type="InterPro" id="IPR007121">
    <property type="entry name" value="RNA_pol_bsu_CS"/>
</dbReference>
<dbReference type="InterPro" id="IPR007644">
    <property type="entry name" value="RNA_pol_bsu_protrusion"/>
</dbReference>
<dbReference type="InterPro" id="IPR007642">
    <property type="entry name" value="RNA_pol_Rpb2_2"/>
</dbReference>
<dbReference type="InterPro" id="IPR037034">
    <property type="entry name" value="RNA_pol_Rpb2_2_sf"/>
</dbReference>
<dbReference type="InterPro" id="IPR007645">
    <property type="entry name" value="RNA_pol_Rpb2_3"/>
</dbReference>
<dbReference type="InterPro" id="IPR007641">
    <property type="entry name" value="RNA_pol_Rpb2_7"/>
</dbReference>
<dbReference type="InterPro" id="IPR014724">
    <property type="entry name" value="RNA_pol_RPB2_OB-fold"/>
</dbReference>
<dbReference type="NCBIfam" id="NF001616">
    <property type="entry name" value="PRK00405.1"/>
    <property type="match status" value="1"/>
</dbReference>
<dbReference type="NCBIfam" id="TIGR02013">
    <property type="entry name" value="rpoB"/>
    <property type="match status" value="1"/>
</dbReference>
<dbReference type="PANTHER" id="PTHR20856">
    <property type="entry name" value="DNA-DIRECTED RNA POLYMERASE I SUBUNIT 2"/>
    <property type="match status" value="1"/>
</dbReference>
<dbReference type="Pfam" id="PF04563">
    <property type="entry name" value="RNA_pol_Rpb2_1"/>
    <property type="match status" value="1"/>
</dbReference>
<dbReference type="Pfam" id="PF04561">
    <property type="entry name" value="RNA_pol_Rpb2_2"/>
    <property type="match status" value="1"/>
</dbReference>
<dbReference type="Pfam" id="PF04565">
    <property type="entry name" value="RNA_pol_Rpb2_3"/>
    <property type="match status" value="1"/>
</dbReference>
<dbReference type="Pfam" id="PF10385">
    <property type="entry name" value="RNA_pol_Rpb2_45"/>
    <property type="match status" value="1"/>
</dbReference>
<dbReference type="Pfam" id="PF00562">
    <property type="entry name" value="RNA_pol_Rpb2_6"/>
    <property type="match status" value="1"/>
</dbReference>
<dbReference type="Pfam" id="PF04560">
    <property type="entry name" value="RNA_pol_Rpb2_7"/>
    <property type="match status" value="1"/>
</dbReference>
<dbReference type="SUPFAM" id="SSF64484">
    <property type="entry name" value="beta and beta-prime subunits of DNA dependent RNA-polymerase"/>
    <property type="match status" value="1"/>
</dbReference>
<dbReference type="PROSITE" id="PS01166">
    <property type="entry name" value="RNA_POL_BETA"/>
    <property type="match status" value="1"/>
</dbReference>
<gene>
    <name evidence="1" type="primary">rpoB</name>
    <name type="ordered locus">syc2507_d</name>
</gene>
<protein>
    <recommendedName>
        <fullName evidence="1">DNA-directed RNA polymerase subunit beta</fullName>
        <shortName evidence="1">RNAP subunit beta</shortName>
        <ecNumber evidence="1">2.7.7.6</ecNumber>
    </recommendedName>
    <alternativeName>
        <fullName evidence="1">RNA polymerase subunit beta</fullName>
    </alternativeName>
    <alternativeName>
        <fullName evidence="1">Transcriptase subunit beta</fullName>
    </alternativeName>
</protein>
<comment type="function">
    <text evidence="1">DNA-dependent RNA polymerase catalyzes the transcription of DNA into RNA using the four ribonucleoside triphosphates as substrates.</text>
</comment>
<comment type="catalytic activity">
    <reaction evidence="1">
        <text>RNA(n) + a ribonucleoside 5'-triphosphate = RNA(n+1) + diphosphate</text>
        <dbReference type="Rhea" id="RHEA:21248"/>
        <dbReference type="Rhea" id="RHEA-COMP:14527"/>
        <dbReference type="Rhea" id="RHEA-COMP:17342"/>
        <dbReference type="ChEBI" id="CHEBI:33019"/>
        <dbReference type="ChEBI" id="CHEBI:61557"/>
        <dbReference type="ChEBI" id="CHEBI:140395"/>
        <dbReference type="EC" id="2.7.7.6"/>
    </reaction>
</comment>
<comment type="subunit">
    <text evidence="1">In cyanobacteria the RNAP catalytic core is composed of 2 alpha, 1 beta, 1 beta', 1 gamma and 1 omega subunit. When a sigma factor is associated with the core the holoenzyme is formed, which can initiate transcription.</text>
</comment>
<comment type="similarity">
    <text evidence="1">Belongs to the RNA polymerase beta chain family.</text>
</comment>
<feature type="chain" id="PRO_0000224114" description="DNA-directed RNA polymerase subunit beta">
    <location>
        <begin position="1"/>
        <end position="1100"/>
    </location>
</feature>
<feature type="region of interest" description="Disordered" evidence="2">
    <location>
        <begin position="1064"/>
        <end position="1100"/>
    </location>
</feature>
<feature type="compositionally biased region" description="Polar residues" evidence="2">
    <location>
        <begin position="1079"/>
        <end position="1089"/>
    </location>
</feature>
<keyword id="KW-0240">DNA-directed RNA polymerase</keyword>
<keyword id="KW-0548">Nucleotidyltransferase</keyword>
<keyword id="KW-0804">Transcription</keyword>
<keyword id="KW-0808">Transferase</keyword>
<organism>
    <name type="scientific">Synechococcus sp. (strain ATCC 27144 / PCC 6301 / SAUG 1402/1)</name>
    <name type="common">Anacystis nidulans</name>
    <dbReference type="NCBI Taxonomy" id="269084"/>
    <lineage>
        <taxon>Bacteria</taxon>
        <taxon>Bacillati</taxon>
        <taxon>Cyanobacteriota</taxon>
        <taxon>Cyanophyceae</taxon>
        <taxon>Synechococcales</taxon>
        <taxon>Synechococcaceae</taxon>
        <taxon>Synechococcus</taxon>
    </lineage>
</organism>
<accession>Q5MZ23</accession>
<evidence type="ECO:0000255" key="1">
    <source>
        <dbReference type="HAMAP-Rule" id="MF_01321"/>
    </source>
</evidence>
<evidence type="ECO:0000256" key="2">
    <source>
        <dbReference type="SAM" id="MobiDB-lite"/>
    </source>
</evidence>